<sequence length="214" mass="25288">MRLRNIPGSREYIAQNDYVVHDPEQKKGKWHEVFGNNNPIHIEIGMGKGQFITSLAMQNPNINYIGIEKYSSVLLRAIEKREEYEGDNLYFLRFDAESITDIFAPSEVDRIYLNFSDPWPKDRHSKRRLTSSEFLARYDQFLVKDGYVAFKTDNRDLFDFSLEQVTLSGWQLRDVTFDLHHSEYVEGNIMTEYEERFSSMGNPIHRLVAFREKE</sequence>
<dbReference type="EC" id="2.1.1.33" evidence="2"/>
<dbReference type="EMBL" id="CP000885">
    <property type="protein sequence ID" value="ABX44264.1"/>
    <property type="molecule type" value="Genomic_DNA"/>
</dbReference>
<dbReference type="RefSeq" id="WP_012201911.1">
    <property type="nucleotide sequence ID" value="NC_010001.1"/>
</dbReference>
<dbReference type="SMR" id="A9KLV5"/>
<dbReference type="STRING" id="357809.Cphy_3917"/>
<dbReference type="KEGG" id="cpy:Cphy_3917"/>
<dbReference type="eggNOG" id="COG0220">
    <property type="taxonomic scope" value="Bacteria"/>
</dbReference>
<dbReference type="HOGENOM" id="CLU_050910_2_1_9"/>
<dbReference type="OrthoDB" id="9802090at2"/>
<dbReference type="UniPathway" id="UPA00989"/>
<dbReference type="Proteomes" id="UP000000370">
    <property type="component" value="Chromosome"/>
</dbReference>
<dbReference type="GO" id="GO:0043527">
    <property type="term" value="C:tRNA methyltransferase complex"/>
    <property type="evidence" value="ECO:0007669"/>
    <property type="project" value="TreeGrafter"/>
</dbReference>
<dbReference type="GO" id="GO:0008176">
    <property type="term" value="F:tRNA (guanine(46)-N7)-methyltransferase activity"/>
    <property type="evidence" value="ECO:0007669"/>
    <property type="project" value="UniProtKB-UniRule"/>
</dbReference>
<dbReference type="CDD" id="cd02440">
    <property type="entry name" value="AdoMet_MTases"/>
    <property type="match status" value="1"/>
</dbReference>
<dbReference type="FunFam" id="3.40.50.150:FF:000035">
    <property type="entry name" value="tRNA (guanine-N(7)-)-methyltransferase"/>
    <property type="match status" value="1"/>
</dbReference>
<dbReference type="Gene3D" id="3.40.50.150">
    <property type="entry name" value="Vaccinia Virus protein VP39"/>
    <property type="match status" value="1"/>
</dbReference>
<dbReference type="HAMAP" id="MF_01057">
    <property type="entry name" value="tRNA_methyltr_TrmB"/>
    <property type="match status" value="1"/>
</dbReference>
<dbReference type="InterPro" id="IPR029063">
    <property type="entry name" value="SAM-dependent_MTases_sf"/>
</dbReference>
<dbReference type="InterPro" id="IPR003358">
    <property type="entry name" value="tRNA_(Gua-N-7)_MeTrfase_Trmb"/>
</dbReference>
<dbReference type="InterPro" id="IPR055361">
    <property type="entry name" value="tRNA_methyltr_TrmB_bact"/>
</dbReference>
<dbReference type="NCBIfam" id="NF001080">
    <property type="entry name" value="PRK00121.2-2"/>
    <property type="match status" value="1"/>
</dbReference>
<dbReference type="NCBIfam" id="TIGR00091">
    <property type="entry name" value="tRNA (guanosine(46)-N7)-methyltransferase TrmB"/>
    <property type="match status" value="1"/>
</dbReference>
<dbReference type="PANTHER" id="PTHR23417">
    <property type="entry name" value="3-DEOXY-D-MANNO-OCTULOSONIC-ACID TRANSFERASE/TRNA GUANINE-N 7 - -METHYLTRANSFERASE"/>
    <property type="match status" value="1"/>
</dbReference>
<dbReference type="PANTHER" id="PTHR23417:SF14">
    <property type="entry name" value="PENTACOTRIPEPTIDE-REPEAT REGION OF PRORP DOMAIN-CONTAINING PROTEIN"/>
    <property type="match status" value="1"/>
</dbReference>
<dbReference type="Pfam" id="PF02390">
    <property type="entry name" value="Methyltransf_4"/>
    <property type="match status" value="1"/>
</dbReference>
<dbReference type="SUPFAM" id="SSF53335">
    <property type="entry name" value="S-adenosyl-L-methionine-dependent methyltransferases"/>
    <property type="match status" value="1"/>
</dbReference>
<dbReference type="PROSITE" id="PS51625">
    <property type="entry name" value="SAM_MT_TRMB"/>
    <property type="match status" value="1"/>
</dbReference>
<protein>
    <recommendedName>
        <fullName evidence="2">tRNA (guanine-N(7)-)-methyltransferase</fullName>
        <ecNumber evidence="2">2.1.1.33</ecNumber>
    </recommendedName>
    <alternativeName>
        <fullName evidence="2">tRNA (guanine(46)-N(7))-methyltransferase</fullName>
    </alternativeName>
    <alternativeName>
        <fullName evidence="2">tRNA(m7G46)-methyltransferase</fullName>
    </alternativeName>
</protein>
<comment type="function">
    <text evidence="2">Catalyzes the formation of N(7)-methylguanine at position 46 (m7G46) in tRNA.</text>
</comment>
<comment type="catalytic activity">
    <reaction evidence="2">
        <text>guanosine(46) in tRNA + S-adenosyl-L-methionine = N(7)-methylguanosine(46) in tRNA + S-adenosyl-L-homocysteine</text>
        <dbReference type="Rhea" id="RHEA:42708"/>
        <dbReference type="Rhea" id="RHEA-COMP:10188"/>
        <dbReference type="Rhea" id="RHEA-COMP:10189"/>
        <dbReference type="ChEBI" id="CHEBI:57856"/>
        <dbReference type="ChEBI" id="CHEBI:59789"/>
        <dbReference type="ChEBI" id="CHEBI:74269"/>
        <dbReference type="ChEBI" id="CHEBI:74480"/>
        <dbReference type="EC" id="2.1.1.33"/>
    </reaction>
</comment>
<comment type="pathway">
    <text evidence="2">tRNA modification; N(7)-methylguanine-tRNA biosynthesis.</text>
</comment>
<comment type="similarity">
    <text evidence="2">Belongs to the class I-like SAM-binding methyltransferase superfamily. TrmB family.</text>
</comment>
<organism>
    <name type="scientific">Lachnoclostridium phytofermentans (strain ATCC 700394 / DSM 18823 / ISDg)</name>
    <name type="common">Clostridium phytofermentans</name>
    <dbReference type="NCBI Taxonomy" id="357809"/>
    <lineage>
        <taxon>Bacteria</taxon>
        <taxon>Bacillati</taxon>
        <taxon>Bacillota</taxon>
        <taxon>Clostridia</taxon>
        <taxon>Lachnospirales</taxon>
        <taxon>Lachnospiraceae</taxon>
    </lineage>
</organism>
<proteinExistence type="inferred from homology"/>
<evidence type="ECO:0000250" key="1"/>
<evidence type="ECO:0000255" key="2">
    <source>
        <dbReference type="HAMAP-Rule" id="MF_01057"/>
    </source>
</evidence>
<keyword id="KW-0489">Methyltransferase</keyword>
<keyword id="KW-1185">Reference proteome</keyword>
<keyword id="KW-0949">S-adenosyl-L-methionine</keyword>
<keyword id="KW-0808">Transferase</keyword>
<keyword id="KW-0819">tRNA processing</keyword>
<reference key="1">
    <citation type="submission" date="2007-11" db="EMBL/GenBank/DDBJ databases">
        <title>Complete genome sequence of Clostridium phytofermentans ISDg.</title>
        <authorList>
            <person name="Leschine S.B."/>
            <person name="Warnick T.A."/>
            <person name="Blanchard J.L."/>
            <person name="Schnell D.J."/>
            <person name="Petit E.L."/>
            <person name="LaTouf W.G."/>
            <person name="Copeland A."/>
            <person name="Lucas S."/>
            <person name="Lapidus A."/>
            <person name="Barry K."/>
            <person name="Glavina del Rio T."/>
            <person name="Dalin E."/>
            <person name="Tice H."/>
            <person name="Pitluck S."/>
            <person name="Kiss H."/>
            <person name="Brettin T."/>
            <person name="Bruce D."/>
            <person name="Detter J.C."/>
            <person name="Han C."/>
            <person name="Kuske C."/>
            <person name="Schmutz J."/>
            <person name="Larimer F."/>
            <person name="Land M."/>
            <person name="Hauser L."/>
            <person name="Kyrpides N."/>
            <person name="Kim E.A."/>
            <person name="Richardson P."/>
        </authorList>
    </citation>
    <scope>NUCLEOTIDE SEQUENCE [LARGE SCALE GENOMIC DNA]</scope>
    <source>
        <strain>ATCC 700394 / DSM 18823 / ISDg</strain>
    </source>
</reference>
<accession>A9KLV5</accession>
<name>TRMB_LACP7</name>
<feature type="chain" id="PRO_1000084440" description="tRNA (guanine-N(7)-)-methyltransferase">
    <location>
        <begin position="1"/>
        <end position="214"/>
    </location>
</feature>
<feature type="active site" evidence="1">
    <location>
        <position position="117"/>
    </location>
</feature>
<feature type="binding site" evidence="2">
    <location>
        <position position="43"/>
    </location>
    <ligand>
        <name>S-adenosyl-L-methionine</name>
        <dbReference type="ChEBI" id="CHEBI:59789"/>
    </ligand>
</feature>
<feature type="binding site" evidence="2">
    <location>
        <position position="68"/>
    </location>
    <ligand>
        <name>S-adenosyl-L-methionine</name>
        <dbReference type="ChEBI" id="CHEBI:59789"/>
    </ligand>
</feature>
<feature type="binding site" evidence="2">
    <location>
        <position position="95"/>
    </location>
    <ligand>
        <name>S-adenosyl-L-methionine</name>
        <dbReference type="ChEBI" id="CHEBI:59789"/>
    </ligand>
</feature>
<feature type="binding site" evidence="2">
    <location>
        <position position="117"/>
    </location>
    <ligand>
        <name>S-adenosyl-L-methionine</name>
        <dbReference type="ChEBI" id="CHEBI:59789"/>
    </ligand>
</feature>
<feature type="binding site" evidence="2">
    <location>
        <position position="121"/>
    </location>
    <ligand>
        <name>substrate</name>
    </ligand>
</feature>
<feature type="binding site" evidence="2">
    <location>
        <position position="153"/>
    </location>
    <ligand>
        <name>substrate</name>
    </ligand>
</feature>
<feature type="binding site" evidence="2">
    <location>
        <begin position="191"/>
        <end position="194"/>
    </location>
    <ligand>
        <name>substrate</name>
    </ligand>
</feature>
<gene>
    <name evidence="2" type="primary">trmB</name>
    <name type="ordered locus">Cphy_3917</name>
</gene>